<proteinExistence type="inferred from homology"/>
<accession>P72190</accession>
<sequence length="287" mass="30201">MLQMAISNLDGVSSAKVEINCVIAPHKAQAQIPGLANVKNIVAVASGKGGVGKSTTAANLALALAREGARVGILDADIYGPSQGVMFGIAEGTRPKIRDQKWFVPIEAHGVEVMSMAFLTDDNTPMVWRGPMVSGALLQLVTQTAWNDLDYLVIDMPPGTGDIQLTLAQKVPVAGSVIVTTPQDLALLDARKGVEMFRKVNIPVLGVVENMAVHICSNCGHAEHLFGEGGGEKLATQYGVEVLASLPLAMEIREQADNGKPTAIADPNSPIALIYQELAVTSGRGLF</sequence>
<feature type="chain" id="PRO_0000184948" description="Iron-sulfur cluster carrier protein">
    <location>
        <begin position="1"/>
        <end position="287"/>
    </location>
</feature>
<feature type="binding site" evidence="1">
    <location>
        <begin position="47"/>
        <end position="54"/>
    </location>
    <ligand>
        <name>ATP</name>
        <dbReference type="ChEBI" id="CHEBI:30616"/>
    </ligand>
</feature>
<name>APBC_PSEFR</name>
<organism>
    <name type="scientific">Pseudomonas fragi</name>
    <dbReference type="NCBI Taxonomy" id="296"/>
    <lineage>
        <taxon>Bacteria</taxon>
        <taxon>Pseudomonadati</taxon>
        <taxon>Pseudomonadota</taxon>
        <taxon>Gammaproteobacteria</taxon>
        <taxon>Pseudomonadales</taxon>
        <taxon>Pseudomonadaceae</taxon>
        <taxon>Pseudomonas</taxon>
    </lineage>
</organism>
<keyword id="KW-0067">ATP-binding</keyword>
<keyword id="KW-0378">Hydrolase</keyword>
<keyword id="KW-0408">Iron</keyword>
<keyword id="KW-0411">Iron-sulfur</keyword>
<keyword id="KW-0479">Metal-binding</keyword>
<keyword id="KW-0547">Nucleotide-binding</keyword>
<dbReference type="EMBL" id="U62986">
    <property type="protein sequence ID" value="AAC45998.1"/>
    <property type="molecule type" value="Genomic_DNA"/>
</dbReference>
<dbReference type="SMR" id="P72190"/>
<dbReference type="STRING" id="296.B6D87_05255"/>
<dbReference type="eggNOG" id="COG0489">
    <property type="taxonomic scope" value="Bacteria"/>
</dbReference>
<dbReference type="GO" id="GO:0005829">
    <property type="term" value="C:cytosol"/>
    <property type="evidence" value="ECO:0007669"/>
    <property type="project" value="TreeGrafter"/>
</dbReference>
<dbReference type="GO" id="GO:0051539">
    <property type="term" value="F:4 iron, 4 sulfur cluster binding"/>
    <property type="evidence" value="ECO:0007669"/>
    <property type="project" value="TreeGrafter"/>
</dbReference>
<dbReference type="GO" id="GO:0005524">
    <property type="term" value="F:ATP binding"/>
    <property type="evidence" value="ECO:0007669"/>
    <property type="project" value="UniProtKB-UniRule"/>
</dbReference>
<dbReference type="GO" id="GO:0016887">
    <property type="term" value="F:ATP hydrolysis activity"/>
    <property type="evidence" value="ECO:0007669"/>
    <property type="project" value="UniProtKB-UniRule"/>
</dbReference>
<dbReference type="GO" id="GO:0140663">
    <property type="term" value="F:ATP-dependent FeS chaperone activity"/>
    <property type="evidence" value="ECO:0007669"/>
    <property type="project" value="InterPro"/>
</dbReference>
<dbReference type="GO" id="GO:0046872">
    <property type="term" value="F:metal ion binding"/>
    <property type="evidence" value="ECO:0007669"/>
    <property type="project" value="UniProtKB-KW"/>
</dbReference>
<dbReference type="GO" id="GO:0016226">
    <property type="term" value="P:iron-sulfur cluster assembly"/>
    <property type="evidence" value="ECO:0007669"/>
    <property type="project" value="InterPro"/>
</dbReference>
<dbReference type="CDD" id="cd02037">
    <property type="entry name" value="Mrp_NBP35"/>
    <property type="match status" value="1"/>
</dbReference>
<dbReference type="FunFam" id="3.40.50.300:FF:000418">
    <property type="entry name" value="Iron-sulfur cluster carrier protein"/>
    <property type="match status" value="1"/>
</dbReference>
<dbReference type="Gene3D" id="3.40.50.300">
    <property type="entry name" value="P-loop containing nucleotide triphosphate hydrolases"/>
    <property type="match status" value="1"/>
</dbReference>
<dbReference type="HAMAP" id="MF_02040">
    <property type="entry name" value="Mrp_NBP35"/>
    <property type="match status" value="1"/>
</dbReference>
<dbReference type="InterPro" id="IPR000808">
    <property type="entry name" value="Mrp-like_CS"/>
</dbReference>
<dbReference type="InterPro" id="IPR019591">
    <property type="entry name" value="Mrp/NBP35_ATP-bd"/>
</dbReference>
<dbReference type="InterPro" id="IPR044304">
    <property type="entry name" value="NUBPL-like"/>
</dbReference>
<dbReference type="InterPro" id="IPR027417">
    <property type="entry name" value="P-loop_NTPase"/>
</dbReference>
<dbReference type="InterPro" id="IPR033756">
    <property type="entry name" value="YlxH/NBP35"/>
</dbReference>
<dbReference type="NCBIfam" id="NF008669">
    <property type="entry name" value="PRK11670.1"/>
    <property type="match status" value="1"/>
</dbReference>
<dbReference type="PANTHER" id="PTHR42961">
    <property type="entry name" value="IRON-SULFUR PROTEIN NUBPL"/>
    <property type="match status" value="1"/>
</dbReference>
<dbReference type="PANTHER" id="PTHR42961:SF2">
    <property type="entry name" value="IRON-SULFUR PROTEIN NUBPL"/>
    <property type="match status" value="1"/>
</dbReference>
<dbReference type="Pfam" id="PF10609">
    <property type="entry name" value="ParA"/>
    <property type="match status" value="1"/>
</dbReference>
<dbReference type="SUPFAM" id="SSF52540">
    <property type="entry name" value="P-loop containing nucleoside triphosphate hydrolases"/>
    <property type="match status" value="1"/>
</dbReference>
<dbReference type="PROSITE" id="PS01215">
    <property type="entry name" value="MRP"/>
    <property type="match status" value="1"/>
</dbReference>
<comment type="function">
    <text evidence="1">Binds and transfers iron-sulfur (Fe-S) clusters to target apoproteins. Can hydrolyze ATP.</text>
</comment>
<comment type="subunit">
    <text evidence="1">Homodimer.</text>
</comment>
<comment type="similarity">
    <text evidence="1">Belongs to the Mrp/NBP35 ATP-binding proteins family.</text>
</comment>
<evidence type="ECO:0000255" key="1">
    <source>
        <dbReference type="HAMAP-Rule" id="MF_02040"/>
    </source>
</evidence>
<protein>
    <recommendedName>
        <fullName evidence="1">Iron-sulfur cluster carrier protein</fullName>
    </recommendedName>
</protein>
<reference key="1">
    <citation type="submission" date="1996-08" db="EMBL/GenBank/DDBJ databases">
        <authorList>
            <person name="Michel V."/>
            <person name="Hebraud M."/>
        </authorList>
    </citation>
    <scope>NUCLEOTIDE SEQUENCE [GENOMIC DNA]</scope>
    <source>
        <strain>K1</strain>
    </source>
</reference>